<gene>
    <name evidence="1" type="primary">hisZ</name>
    <name type="ordered locus">Bxeno_A2812</name>
    <name type="ORF">Bxe_A1605</name>
</gene>
<dbReference type="EMBL" id="CP000270">
    <property type="protein sequence ID" value="ABE31350.1"/>
    <property type="molecule type" value="Genomic_DNA"/>
</dbReference>
<dbReference type="RefSeq" id="WP_011488935.1">
    <property type="nucleotide sequence ID" value="NC_007951.1"/>
</dbReference>
<dbReference type="SMR" id="Q13X39"/>
<dbReference type="STRING" id="266265.Bxe_A1605"/>
<dbReference type="KEGG" id="bxb:DR64_3764"/>
<dbReference type="KEGG" id="bxe:Bxe_A1605"/>
<dbReference type="PATRIC" id="fig|266265.5.peg.2953"/>
<dbReference type="eggNOG" id="COG3705">
    <property type="taxonomic scope" value="Bacteria"/>
</dbReference>
<dbReference type="OrthoDB" id="9769617at2"/>
<dbReference type="UniPathway" id="UPA00031">
    <property type="reaction ID" value="UER00006"/>
</dbReference>
<dbReference type="Proteomes" id="UP000001817">
    <property type="component" value="Chromosome 1"/>
</dbReference>
<dbReference type="GO" id="GO:0005737">
    <property type="term" value="C:cytoplasm"/>
    <property type="evidence" value="ECO:0007669"/>
    <property type="project" value="UniProtKB-SubCell"/>
</dbReference>
<dbReference type="GO" id="GO:0004821">
    <property type="term" value="F:histidine-tRNA ligase activity"/>
    <property type="evidence" value="ECO:0007669"/>
    <property type="project" value="TreeGrafter"/>
</dbReference>
<dbReference type="GO" id="GO:0006427">
    <property type="term" value="P:histidyl-tRNA aminoacylation"/>
    <property type="evidence" value="ECO:0007669"/>
    <property type="project" value="TreeGrafter"/>
</dbReference>
<dbReference type="GO" id="GO:0000105">
    <property type="term" value="P:L-histidine biosynthetic process"/>
    <property type="evidence" value="ECO:0007669"/>
    <property type="project" value="UniProtKB-UniRule"/>
</dbReference>
<dbReference type="CDD" id="cd00773">
    <property type="entry name" value="HisRS-like_core"/>
    <property type="match status" value="1"/>
</dbReference>
<dbReference type="Gene3D" id="3.30.930.10">
    <property type="entry name" value="Bira Bifunctional Protein, Domain 2"/>
    <property type="match status" value="1"/>
</dbReference>
<dbReference type="HAMAP" id="MF_00125">
    <property type="entry name" value="HisZ"/>
    <property type="match status" value="1"/>
</dbReference>
<dbReference type="InterPro" id="IPR045864">
    <property type="entry name" value="aa-tRNA-synth_II/BPL/LPL"/>
</dbReference>
<dbReference type="InterPro" id="IPR041715">
    <property type="entry name" value="HisRS-like_core"/>
</dbReference>
<dbReference type="InterPro" id="IPR004516">
    <property type="entry name" value="HisRS/HisZ"/>
</dbReference>
<dbReference type="InterPro" id="IPR004517">
    <property type="entry name" value="HisZ"/>
</dbReference>
<dbReference type="NCBIfam" id="TIGR00443">
    <property type="entry name" value="hisZ_biosyn_reg"/>
    <property type="match status" value="1"/>
</dbReference>
<dbReference type="NCBIfam" id="NF008935">
    <property type="entry name" value="PRK12292.1-1"/>
    <property type="match status" value="1"/>
</dbReference>
<dbReference type="NCBIfam" id="NF009086">
    <property type="entry name" value="PRK12421.1"/>
    <property type="match status" value="1"/>
</dbReference>
<dbReference type="PANTHER" id="PTHR43707:SF1">
    <property type="entry name" value="HISTIDINE--TRNA LIGASE, MITOCHONDRIAL-RELATED"/>
    <property type="match status" value="1"/>
</dbReference>
<dbReference type="PANTHER" id="PTHR43707">
    <property type="entry name" value="HISTIDYL-TRNA SYNTHETASE"/>
    <property type="match status" value="1"/>
</dbReference>
<dbReference type="Pfam" id="PF13393">
    <property type="entry name" value="tRNA-synt_His"/>
    <property type="match status" value="1"/>
</dbReference>
<dbReference type="SUPFAM" id="SSF55681">
    <property type="entry name" value="Class II aaRS and biotin synthetases"/>
    <property type="match status" value="1"/>
</dbReference>
<protein>
    <recommendedName>
        <fullName evidence="1">ATP phosphoribosyltransferase regulatory subunit</fullName>
    </recommendedName>
</protein>
<keyword id="KW-0028">Amino-acid biosynthesis</keyword>
<keyword id="KW-0963">Cytoplasm</keyword>
<keyword id="KW-0368">Histidine biosynthesis</keyword>
<keyword id="KW-1185">Reference proteome</keyword>
<name>HISZ_PARXL</name>
<comment type="function">
    <text evidence="1">Required for the first step of histidine biosynthesis. May allow the feedback regulation of ATP phosphoribosyltransferase activity by histidine.</text>
</comment>
<comment type="pathway">
    <text evidence="1">Amino-acid biosynthesis; L-histidine biosynthesis; L-histidine from 5-phospho-alpha-D-ribose 1-diphosphate: step 1/9.</text>
</comment>
<comment type="subunit">
    <text evidence="1">Heteromultimer composed of HisG and HisZ subunits.</text>
</comment>
<comment type="subcellular location">
    <subcellularLocation>
        <location evidence="1">Cytoplasm</location>
    </subcellularLocation>
</comment>
<comment type="miscellaneous">
    <text>This function is generally fulfilled by the C-terminal part of HisG, which is missing in some bacteria such as this one.</text>
</comment>
<comment type="similarity">
    <text evidence="1">Belongs to the class-II aminoacyl-tRNA synthetase family. HisZ subfamily.</text>
</comment>
<accession>Q13X39</accession>
<proteinExistence type="inferred from homology"/>
<sequence length="383" mass="41886">MSTWLLPENIADVLPSEARKIEELRRHLLDRFRSYGYEMVMPPLLEYIESLLTGGGHDLNLRTFKLVDQLSGRTLGLRADITPQVARIDAHLLNRQGVTRLCYAGNVAHTRPRGLHATREQIQIGAEIYGHAGLEADLEIQQLMLDALRLAGLAKVRLDLCHAGVLAALIEAEPAAAELGQSLYDALAGKDVPRLVELTANLTPVIRDALRALPRLYGDASVLDEARARLPNMPAIARALDDLAFLASQVDGAEVMIDLADLRGYAYHSGVMFSAYVDGVPNAVARGGRYDHVGQAYGRARAATGFSLDLREVARISPVEARSSAILAPWQHDEALRVSVAALRDAGEVVIQALPGHEHDLDEFAFDRVLVERSGNWVVEPRA</sequence>
<reference key="1">
    <citation type="journal article" date="2006" name="Proc. Natl. Acad. Sci. U.S.A.">
        <title>Burkholderia xenovorans LB400 harbors a multi-replicon, 9.73-Mbp genome shaped for versatility.</title>
        <authorList>
            <person name="Chain P.S.G."/>
            <person name="Denef V.J."/>
            <person name="Konstantinidis K.T."/>
            <person name="Vergez L.M."/>
            <person name="Agullo L."/>
            <person name="Reyes V.L."/>
            <person name="Hauser L."/>
            <person name="Cordova M."/>
            <person name="Gomez L."/>
            <person name="Gonzalez M."/>
            <person name="Land M."/>
            <person name="Lao V."/>
            <person name="Larimer F."/>
            <person name="LiPuma J.J."/>
            <person name="Mahenthiralingam E."/>
            <person name="Malfatti S.A."/>
            <person name="Marx C.J."/>
            <person name="Parnell J.J."/>
            <person name="Ramette A."/>
            <person name="Richardson P."/>
            <person name="Seeger M."/>
            <person name="Smith D."/>
            <person name="Spilker T."/>
            <person name="Sul W.J."/>
            <person name="Tsoi T.V."/>
            <person name="Ulrich L.E."/>
            <person name="Zhulin I.B."/>
            <person name="Tiedje J.M."/>
        </authorList>
    </citation>
    <scope>NUCLEOTIDE SEQUENCE [LARGE SCALE GENOMIC DNA]</scope>
    <source>
        <strain>LB400</strain>
    </source>
</reference>
<feature type="chain" id="PRO_1000016256" description="ATP phosphoribosyltransferase regulatory subunit">
    <location>
        <begin position="1"/>
        <end position="383"/>
    </location>
</feature>
<organism>
    <name type="scientific">Paraburkholderia xenovorans (strain LB400)</name>
    <dbReference type="NCBI Taxonomy" id="266265"/>
    <lineage>
        <taxon>Bacteria</taxon>
        <taxon>Pseudomonadati</taxon>
        <taxon>Pseudomonadota</taxon>
        <taxon>Betaproteobacteria</taxon>
        <taxon>Burkholderiales</taxon>
        <taxon>Burkholderiaceae</taxon>
        <taxon>Paraburkholderia</taxon>
    </lineage>
</organism>
<evidence type="ECO:0000255" key="1">
    <source>
        <dbReference type="HAMAP-Rule" id="MF_00125"/>
    </source>
</evidence>